<name>PYRD_ANADF</name>
<sequence length="363" mass="38382">MIWPALRWTLFHLDPERAHRLAHGALHRVPPGLARLRRPAVPPELRVSCLGLDFDGPIGLAAGFDKGDASIAGLFALGFSHVEIGTITPRPQAGNEPPRLFRLVEHRALVNRMGFNNAGAEVCARRLAGVPATARMGPVGVNVGKNKTTPNEDAAADYLACIDRLHPYADYLVVNISSPNTPGLRQLQERDQLDALLRACAGRLRERAPGKPLLVKLAPDLSPTALDEAVDVAIDAGVSGIVATNTTLSRAGVERHPRAREAGGLSGAPLEALATSVVRRCYIRAAGRVPIVGCGGVMNAEGAYAKIRAGATLVQVYTGLVYGGPGFVRRLNDGLARLLARDGFRTVAEAVGADVETAERAGV</sequence>
<dbReference type="EC" id="1.3.5.2" evidence="1"/>
<dbReference type="EMBL" id="CP000769">
    <property type="protein sequence ID" value="ABS26672.1"/>
    <property type="molecule type" value="Genomic_DNA"/>
</dbReference>
<dbReference type="RefSeq" id="WP_012097260.1">
    <property type="nucleotide sequence ID" value="NC_009675.1"/>
</dbReference>
<dbReference type="SMR" id="A7HD76"/>
<dbReference type="STRING" id="404589.Anae109_2471"/>
<dbReference type="KEGG" id="afw:Anae109_2471"/>
<dbReference type="eggNOG" id="COG0167">
    <property type="taxonomic scope" value="Bacteria"/>
</dbReference>
<dbReference type="HOGENOM" id="CLU_013640_0_0_7"/>
<dbReference type="OrthoDB" id="9802377at2"/>
<dbReference type="UniPathway" id="UPA00070">
    <property type="reaction ID" value="UER00946"/>
</dbReference>
<dbReference type="Proteomes" id="UP000006382">
    <property type="component" value="Chromosome"/>
</dbReference>
<dbReference type="GO" id="GO:0005737">
    <property type="term" value="C:cytoplasm"/>
    <property type="evidence" value="ECO:0007669"/>
    <property type="project" value="InterPro"/>
</dbReference>
<dbReference type="GO" id="GO:0005886">
    <property type="term" value="C:plasma membrane"/>
    <property type="evidence" value="ECO:0007669"/>
    <property type="project" value="UniProtKB-SubCell"/>
</dbReference>
<dbReference type="GO" id="GO:0106430">
    <property type="term" value="F:dihydroorotate dehydrogenase (quinone) activity"/>
    <property type="evidence" value="ECO:0007669"/>
    <property type="project" value="UniProtKB-EC"/>
</dbReference>
<dbReference type="GO" id="GO:0006207">
    <property type="term" value="P:'de novo' pyrimidine nucleobase biosynthetic process"/>
    <property type="evidence" value="ECO:0007669"/>
    <property type="project" value="InterPro"/>
</dbReference>
<dbReference type="GO" id="GO:0044205">
    <property type="term" value="P:'de novo' UMP biosynthetic process"/>
    <property type="evidence" value="ECO:0007669"/>
    <property type="project" value="UniProtKB-UniRule"/>
</dbReference>
<dbReference type="CDD" id="cd04738">
    <property type="entry name" value="DHOD_2_like"/>
    <property type="match status" value="1"/>
</dbReference>
<dbReference type="Gene3D" id="3.20.20.70">
    <property type="entry name" value="Aldolase class I"/>
    <property type="match status" value="1"/>
</dbReference>
<dbReference type="HAMAP" id="MF_00225">
    <property type="entry name" value="DHO_dh_type2"/>
    <property type="match status" value="1"/>
</dbReference>
<dbReference type="InterPro" id="IPR013785">
    <property type="entry name" value="Aldolase_TIM"/>
</dbReference>
<dbReference type="InterPro" id="IPR050074">
    <property type="entry name" value="DHO_dehydrogenase"/>
</dbReference>
<dbReference type="InterPro" id="IPR005719">
    <property type="entry name" value="Dihydroorotate_DH_2"/>
</dbReference>
<dbReference type="InterPro" id="IPR005720">
    <property type="entry name" value="Dihydroorotate_DH_cat"/>
</dbReference>
<dbReference type="InterPro" id="IPR001295">
    <property type="entry name" value="Dihydroorotate_DH_CS"/>
</dbReference>
<dbReference type="NCBIfam" id="NF003645">
    <property type="entry name" value="PRK05286.1-2"/>
    <property type="match status" value="1"/>
</dbReference>
<dbReference type="NCBIfam" id="NF003652">
    <property type="entry name" value="PRK05286.2-5"/>
    <property type="match status" value="1"/>
</dbReference>
<dbReference type="NCBIfam" id="TIGR01036">
    <property type="entry name" value="pyrD_sub2"/>
    <property type="match status" value="1"/>
</dbReference>
<dbReference type="PANTHER" id="PTHR48109:SF4">
    <property type="entry name" value="DIHYDROOROTATE DEHYDROGENASE (QUINONE), MITOCHONDRIAL"/>
    <property type="match status" value="1"/>
</dbReference>
<dbReference type="PANTHER" id="PTHR48109">
    <property type="entry name" value="DIHYDROOROTATE DEHYDROGENASE (QUINONE), MITOCHONDRIAL-RELATED"/>
    <property type="match status" value="1"/>
</dbReference>
<dbReference type="Pfam" id="PF01180">
    <property type="entry name" value="DHO_dh"/>
    <property type="match status" value="1"/>
</dbReference>
<dbReference type="SUPFAM" id="SSF51395">
    <property type="entry name" value="FMN-linked oxidoreductases"/>
    <property type="match status" value="1"/>
</dbReference>
<dbReference type="PROSITE" id="PS00911">
    <property type="entry name" value="DHODEHASE_1"/>
    <property type="match status" value="1"/>
</dbReference>
<dbReference type="PROSITE" id="PS00912">
    <property type="entry name" value="DHODEHASE_2"/>
    <property type="match status" value="1"/>
</dbReference>
<reference key="1">
    <citation type="journal article" date="2015" name="Genome Announc.">
        <title>Complete genome sequence of Anaeromyxobacter sp. Fw109-5, an anaerobic, metal-reducing bacterium isolated from a contaminated subsurface environment.</title>
        <authorList>
            <person name="Hwang C."/>
            <person name="Copeland A."/>
            <person name="Lucas S."/>
            <person name="Lapidus A."/>
            <person name="Barry K."/>
            <person name="Glavina Del Rio T."/>
            <person name="Dalin E."/>
            <person name="Tice H."/>
            <person name="Pitluck S."/>
            <person name="Sims D."/>
            <person name="Brettin T."/>
            <person name="Bruce D.C."/>
            <person name="Detter J.C."/>
            <person name="Han C.S."/>
            <person name="Schmutz J."/>
            <person name="Larimer F.W."/>
            <person name="Land M.L."/>
            <person name="Hauser L.J."/>
            <person name="Kyrpides N."/>
            <person name="Lykidis A."/>
            <person name="Richardson P."/>
            <person name="Belieav A."/>
            <person name="Sanford R.A."/>
            <person name="Loeffler F.E."/>
            <person name="Fields M.W."/>
        </authorList>
    </citation>
    <scope>NUCLEOTIDE SEQUENCE [LARGE SCALE GENOMIC DNA]</scope>
    <source>
        <strain>Fw109-5</strain>
    </source>
</reference>
<organism>
    <name type="scientific">Anaeromyxobacter sp. (strain Fw109-5)</name>
    <dbReference type="NCBI Taxonomy" id="404589"/>
    <lineage>
        <taxon>Bacteria</taxon>
        <taxon>Pseudomonadati</taxon>
        <taxon>Myxococcota</taxon>
        <taxon>Myxococcia</taxon>
        <taxon>Myxococcales</taxon>
        <taxon>Cystobacterineae</taxon>
        <taxon>Anaeromyxobacteraceae</taxon>
        <taxon>Anaeromyxobacter</taxon>
    </lineage>
</organism>
<keyword id="KW-1003">Cell membrane</keyword>
<keyword id="KW-0285">Flavoprotein</keyword>
<keyword id="KW-0288">FMN</keyword>
<keyword id="KW-0472">Membrane</keyword>
<keyword id="KW-0560">Oxidoreductase</keyword>
<keyword id="KW-0665">Pyrimidine biosynthesis</keyword>
<keyword id="KW-1185">Reference proteome</keyword>
<gene>
    <name evidence="1" type="primary">pyrD</name>
    <name type="ordered locus">Anae109_2471</name>
</gene>
<protein>
    <recommendedName>
        <fullName evidence="1">Dihydroorotate dehydrogenase (quinone)</fullName>
        <ecNumber evidence="1">1.3.5.2</ecNumber>
    </recommendedName>
    <alternativeName>
        <fullName evidence="1">DHOdehase</fullName>
        <shortName evidence="1">DHOD</shortName>
        <shortName evidence="1">DHODase</shortName>
    </alternativeName>
    <alternativeName>
        <fullName evidence="1">Dihydroorotate oxidase</fullName>
    </alternativeName>
</protein>
<comment type="function">
    <text evidence="1">Catalyzes the conversion of dihydroorotate to orotate with quinone as electron acceptor.</text>
</comment>
<comment type="catalytic activity">
    <reaction evidence="1">
        <text>(S)-dihydroorotate + a quinone = orotate + a quinol</text>
        <dbReference type="Rhea" id="RHEA:30187"/>
        <dbReference type="ChEBI" id="CHEBI:24646"/>
        <dbReference type="ChEBI" id="CHEBI:30839"/>
        <dbReference type="ChEBI" id="CHEBI:30864"/>
        <dbReference type="ChEBI" id="CHEBI:132124"/>
        <dbReference type="EC" id="1.3.5.2"/>
    </reaction>
</comment>
<comment type="cofactor">
    <cofactor evidence="1">
        <name>FMN</name>
        <dbReference type="ChEBI" id="CHEBI:58210"/>
    </cofactor>
    <text evidence="1">Binds 1 FMN per subunit.</text>
</comment>
<comment type="pathway">
    <text evidence="1">Pyrimidine metabolism; UMP biosynthesis via de novo pathway; orotate from (S)-dihydroorotate (quinone route): step 1/1.</text>
</comment>
<comment type="subunit">
    <text evidence="1">Monomer.</text>
</comment>
<comment type="subcellular location">
    <subcellularLocation>
        <location evidence="1">Cell membrane</location>
        <topology evidence="1">Peripheral membrane protein</topology>
    </subcellularLocation>
</comment>
<comment type="similarity">
    <text evidence="1">Belongs to the dihydroorotate dehydrogenase family. Type 2 subfamily.</text>
</comment>
<proteinExistence type="inferred from homology"/>
<evidence type="ECO:0000255" key="1">
    <source>
        <dbReference type="HAMAP-Rule" id="MF_00225"/>
    </source>
</evidence>
<accession>A7HD76</accession>
<feature type="chain" id="PRO_1000024150" description="Dihydroorotate dehydrogenase (quinone)">
    <location>
        <begin position="1"/>
        <end position="363"/>
    </location>
</feature>
<feature type="active site" description="Nucleophile" evidence="1">
    <location>
        <position position="178"/>
    </location>
</feature>
<feature type="binding site" evidence="1">
    <location>
        <begin position="62"/>
        <end position="66"/>
    </location>
    <ligand>
        <name>FMN</name>
        <dbReference type="ChEBI" id="CHEBI:58210"/>
    </ligand>
</feature>
<feature type="binding site" evidence="1">
    <location>
        <position position="66"/>
    </location>
    <ligand>
        <name>substrate</name>
    </ligand>
</feature>
<feature type="binding site" evidence="1">
    <location>
        <position position="86"/>
    </location>
    <ligand>
        <name>FMN</name>
        <dbReference type="ChEBI" id="CHEBI:58210"/>
    </ligand>
</feature>
<feature type="binding site" evidence="1">
    <location>
        <begin position="111"/>
        <end position="115"/>
    </location>
    <ligand>
        <name>substrate</name>
    </ligand>
</feature>
<feature type="binding site" evidence="1">
    <location>
        <position position="142"/>
    </location>
    <ligand>
        <name>FMN</name>
        <dbReference type="ChEBI" id="CHEBI:58210"/>
    </ligand>
</feature>
<feature type="binding site" evidence="1">
    <location>
        <position position="175"/>
    </location>
    <ligand>
        <name>FMN</name>
        <dbReference type="ChEBI" id="CHEBI:58210"/>
    </ligand>
</feature>
<feature type="binding site" evidence="1">
    <location>
        <position position="175"/>
    </location>
    <ligand>
        <name>substrate</name>
    </ligand>
</feature>
<feature type="binding site" evidence="1">
    <location>
        <position position="180"/>
    </location>
    <ligand>
        <name>substrate</name>
    </ligand>
</feature>
<feature type="binding site" evidence="1">
    <location>
        <position position="216"/>
    </location>
    <ligand>
        <name>FMN</name>
        <dbReference type="ChEBI" id="CHEBI:58210"/>
    </ligand>
</feature>
<feature type="binding site" evidence="1">
    <location>
        <position position="244"/>
    </location>
    <ligand>
        <name>FMN</name>
        <dbReference type="ChEBI" id="CHEBI:58210"/>
    </ligand>
</feature>
<feature type="binding site" evidence="1">
    <location>
        <begin position="245"/>
        <end position="246"/>
    </location>
    <ligand>
        <name>substrate</name>
    </ligand>
</feature>
<feature type="binding site" evidence="1">
    <location>
        <position position="267"/>
    </location>
    <ligand>
        <name>FMN</name>
        <dbReference type="ChEBI" id="CHEBI:58210"/>
    </ligand>
</feature>
<feature type="binding site" evidence="1">
    <location>
        <position position="296"/>
    </location>
    <ligand>
        <name>FMN</name>
        <dbReference type="ChEBI" id="CHEBI:58210"/>
    </ligand>
</feature>
<feature type="binding site" evidence="1">
    <location>
        <begin position="317"/>
        <end position="318"/>
    </location>
    <ligand>
        <name>FMN</name>
        <dbReference type="ChEBI" id="CHEBI:58210"/>
    </ligand>
</feature>